<proteinExistence type="inferred from homology"/>
<name>TWST1_CEBCA</name>
<keyword id="KW-0010">Activator</keyword>
<keyword id="KW-0090">Biological rhythms</keyword>
<keyword id="KW-0217">Developmental protein</keyword>
<keyword id="KW-0221">Differentiation</keyword>
<keyword id="KW-0238">DNA-binding</keyword>
<keyword id="KW-0517">Myogenesis</keyword>
<keyword id="KW-0539">Nucleus</keyword>
<keyword id="KW-0678">Repressor</keyword>
<keyword id="KW-0804">Transcription</keyword>
<keyword id="KW-0805">Transcription regulation</keyword>
<gene>
    <name type="primary">TWIST1</name>
    <name type="synonym">TWIST</name>
</gene>
<reference key="1">
    <citation type="journal article" date="2002" name="Dev. Genes Evol.">
        <title>Natural Twist protein variants in a panel of eleven non-human primates: possible implications of Twist gene-tree for primate species tree.</title>
        <authorList>
            <person name="Gachot-Neveu H."/>
            <person name="Stoetzel C."/>
            <person name="Quillet R."/>
            <person name="Dollfus H."/>
            <person name="Perrin-Schmitt F."/>
        </authorList>
    </citation>
    <scope>NUCLEOTIDE SEQUENCE [GENOMIC DNA]</scope>
    <source>
        <tissue>Blood</tissue>
    </source>
</reference>
<accession>Q8MIH8</accession>
<feature type="chain" id="PRO_0000284944" description="Twist-related protein 1">
    <location>
        <begin position="1"/>
        <end position="207"/>
    </location>
</feature>
<feature type="domain" description="bHLH" evidence="3">
    <location>
        <begin position="113"/>
        <end position="164"/>
    </location>
</feature>
<feature type="region of interest" description="Disordered" evidence="4">
    <location>
        <begin position="1"/>
        <end position="110"/>
    </location>
</feature>
<feature type="region of interest" description="Sufficient for transactivation activity" evidence="1">
    <location>
        <begin position="166"/>
        <end position="196"/>
    </location>
</feature>
<feature type="compositionally biased region" description="Low complexity" evidence="4">
    <location>
        <begin position="1"/>
        <end position="18"/>
    </location>
</feature>
<feature type="compositionally biased region" description="Basic residues" evidence="4">
    <location>
        <begin position="34"/>
        <end position="43"/>
    </location>
</feature>
<feature type="compositionally biased region" description="Gly residues" evidence="4">
    <location>
        <begin position="46"/>
        <end position="65"/>
    </location>
</feature>
<feature type="compositionally biased region" description="Gly residues" evidence="4">
    <location>
        <begin position="80"/>
        <end position="104"/>
    </location>
</feature>
<sequence length="207" mass="21269">MMQDVSSSPVSPADDSLSNSEEEPDRQQPPSGKRGGRKRRSSRRSAGGGAGPGGAAGGGVGGGDEPGSPAQGKRGKKSAGCGGGGSAGGGGGGGGGGSSSGGGSPQSYEELQTQRVMANVRERQRTQSLNEAFAALRKIIPTLPSDKLSKIQTLKLAARYIDFLYQVLQSDELDSKMASCSYVAHERLSYAFSVWRMEGAWSMSASH</sequence>
<protein>
    <recommendedName>
        <fullName>Twist-related protein 1</fullName>
    </recommendedName>
</protein>
<comment type="function">
    <text evidence="2">Acts as a transcriptional regulator. Inhibits myogenesis by sequestrating E proteins, inhibiting trans-activation by MEF2, and inhibiting DNA-binding by MYOD1 through physical interaction. This interaction probably involves the basic domains of both proteins. Also represses expression of pro-inflammatory cytokines such as TNFA and IL1B. Regulates cranial suture patterning and fusion. Activates transcription as a heterodimer with E proteins. Regulates gene expression differentially, depending on dimer composition. Homodimers induce expression of FGFR2 and POSTN while heterodimers repress FGFR2 and POSTN expression and induce THBS1 expression. Heterodimerization is also required for osteoblast differentiation. Represses the activity of the circadian transcriptional activator: NPAS2-BMAL1 heterodimer (By similarity).</text>
</comment>
<comment type="subunit">
    <text evidence="2">Efficient DNA binding requires dimerization with another bHLH protein. Homodimer or heterodimer with E proteins such as TCF3. ID1 binds preferentially to TCF3 but does not interact efficiently with TWIST1 so ID1 levels control the amount of TCF3 available to dimerize with TWIST and thus determine the type of dimer formed (By similarity).</text>
</comment>
<comment type="subcellular location">
    <subcellularLocation>
        <location evidence="3">Nucleus</location>
    </subcellularLocation>
</comment>
<dbReference type="EMBL" id="AJ488163">
    <property type="protein sequence ID" value="CAD32477.1"/>
    <property type="molecule type" value="Genomic_DNA"/>
</dbReference>
<dbReference type="SMR" id="Q8MIH8"/>
<dbReference type="GO" id="GO:0005634">
    <property type="term" value="C:nucleus"/>
    <property type="evidence" value="ECO:0007669"/>
    <property type="project" value="UniProtKB-SubCell"/>
</dbReference>
<dbReference type="GO" id="GO:0000981">
    <property type="term" value="F:DNA-binding transcription factor activity, RNA polymerase II-specific"/>
    <property type="evidence" value="ECO:0007669"/>
    <property type="project" value="InterPro"/>
</dbReference>
<dbReference type="GO" id="GO:0046983">
    <property type="term" value="F:protein dimerization activity"/>
    <property type="evidence" value="ECO:0007669"/>
    <property type="project" value="InterPro"/>
</dbReference>
<dbReference type="GO" id="GO:0000977">
    <property type="term" value="F:RNA polymerase II transcription regulatory region sequence-specific DNA binding"/>
    <property type="evidence" value="ECO:0007669"/>
    <property type="project" value="TreeGrafter"/>
</dbReference>
<dbReference type="GO" id="GO:0030154">
    <property type="term" value="P:cell differentiation"/>
    <property type="evidence" value="ECO:0007669"/>
    <property type="project" value="UniProtKB-KW"/>
</dbReference>
<dbReference type="GO" id="GO:0007517">
    <property type="term" value="P:muscle organ development"/>
    <property type="evidence" value="ECO:0007669"/>
    <property type="project" value="UniProtKB-KW"/>
</dbReference>
<dbReference type="GO" id="GO:0045892">
    <property type="term" value="P:negative regulation of DNA-templated transcription"/>
    <property type="evidence" value="ECO:0000250"/>
    <property type="project" value="UniProtKB"/>
</dbReference>
<dbReference type="GO" id="GO:0048511">
    <property type="term" value="P:rhythmic process"/>
    <property type="evidence" value="ECO:0007669"/>
    <property type="project" value="UniProtKB-KW"/>
</dbReference>
<dbReference type="CDD" id="cd11412">
    <property type="entry name" value="bHLH_TS_TWIST1"/>
    <property type="match status" value="1"/>
</dbReference>
<dbReference type="FunFam" id="4.10.280.10:FF:000030">
    <property type="entry name" value="Twist transcription factor"/>
    <property type="match status" value="1"/>
</dbReference>
<dbReference type="Gene3D" id="4.10.280.10">
    <property type="entry name" value="Helix-loop-helix DNA-binding domain"/>
    <property type="match status" value="1"/>
</dbReference>
<dbReference type="InterPro" id="IPR011598">
    <property type="entry name" value="bHLH_dom"/>
</dbReference>
<dbReference type="InterPro" id="IPR050283">
    <property type="entry name" value="E-box_TF_Regulators"/>
</dbReference>
<dbReference type="InterPro" id="IPR036638">
    <property type="entry name" value="HLH_DNA-bd_sf"/>
</dbReference>
<dbReference type="InterPro" id="IPR047093">
    <property type="entry name" value="TWIST1_bHLH"/>
</dbReference>
<dbReference type="PANTHER" id="PTHR23349">
    <property type="entry name" value="BASIC HELIX-LOOP-HELIX TRANSCRIPTION FACTOR, TWIST"/>
    <property type="match status" value="1"/>
</dbReference>
<dbReference type="PANTHER" id="PTHR23349:SF64">
    <property type="entry name" value="TWIST-RELATED PROTEIN 1"/>
    <property type="match status" value="1"/>
</dbReference>
<dbReference type="Pfam" id="PF00010">
    <property type="entry name" value="HLH"/>
    <property type="match status" value="1"/>
</dbReference>
<dbReference type="SMART" id="SM00353">
    <property type="entry name" value="HLH"/>
    <property type="match status" value="1"/>
</dbReference>
<dbReference type="SUPFAM" id="SSF47459">
    <property type="entry name" value="HLH, helix-loop-helix DNA-binding domain"/>
    <property type="match status" value="1"/>
</dbReference>
<dbReference type="PROSITE" id="PS50888">
    <property type="entry name" value="BHLH"/>
    <property type="match status" value="1"/>
</dbReference>
<evidence type="ECO:0000250" key="1"/>
<evidence type="ECO:0000250" key="2">
    <source>
        <dbReference type="UniProtKB" id="P26687"/>
    </source>
</evidence>
<evidence type="ECO:0000255" key="3">
    <source>
        <dbReference type="PROSITE-ProRule" id="PRU00981"/>
    </source>
</evidence>
<evidence type="ECO:0000256" key="4">
    <source>
        <dbReference type="SAM" id="MobiDB-lite"/>
    </source>
</evidence>
<organism>
    <name type="scientific">Cebus capucinus</name>
    <name type="common">White-faced sapajou</name>
    <dbReference type="NCBI Taxonomy" id="9516"/>
    <lineage>
        <taxon>Eukaryota</taxon>
        <taxon>Metazoa</taxon>
        <taxon>Chordata</taxon>
        <taxon>Craniata</taxon>
        <taxon>Vertebrata</taxon>
        <taxon>Euteleostomi</taxon>
        <taxon>Mammalia</taxon>
        <taxon>Eutheria</taxon>
        <taxon>Euarchontoglires</taxon>
        <taxon>Primates</taxon>
        <taxon>Haplorrhini</taxon>
        <taxon>Platyrrhini</taxon>
        <taxon>Cebidae</taxon>
        <taxon>Cebinae</taxon>
        <taxon>Cebus</taxon>
    </lineage>
</organism>